<dbReference type="EMBL" id="CP000250">
    <property type="protein sequence ID" value="ABD07005.1"/>
    <property type="molecule type" value="Genomic_DNA"/>
</dbReference>
<dbReference type="RefSeq" id="WP_011441190.1">
    <property type="nucleotide sequence ID" value="NC_007778.1"/>
</dbReference>
<dbReference type="SMR" id="Q2IXQ5"/>
<dbReference type="STRING" id="316058.RPB_2300"/>
<dbReference type="KEGG" id="rpb:RPB_2300"/>
<dbReference type="eggNOG" id="COG0091">
    <property type="taxonomic scope" value="Bacteria"/>
</dbReference>
<dbReference type="HOGENOM" id="CLU_083987_3_0_5"/>
<dbReference type="OrthoDB" id="9805969at2"/>
<dbReference type="Proteomes" id="UP000008809">
    <property type="component" value="Chromosome"/>
</dbReference>
<dbReference type="GO" id="GO:0022625">
    <property type="term" value="C:cytosolic large ribosomal subunit"/>
    <property type="evidence" value="ECO:0007669"/>
    <property type="project" value="TreeGrafter"/>
</dbReference>
<dbReference type="GO" id="GO:0019843">
    <property type="term" value="F:rRNA binding"/>
    <property type="evidence" value="ECO:0007669"/>
    <property type="project" value="UniProtKB-UniRule"/>
</dbReference>
<dbReference type="GO" id="GO:0003735">
    <property type="term" value="F:structural constituent of ribosome"/>
    <property type="evidence" value="ECO:0007669"/>
    <property type="project" value="InterPro"/>
</dbReference>
<dbReference type="GO" id="GO:0006412">
    <property type="term" value="P:translation"/>
    <property type="evidence" value="ECO:0007669"/>
    <property type="project" value="UniProtKB-UniRule"/>
</dbReference>
<dbReference type="CDD" id="cd00336">
    <property type="entry name" value="Ribosomal_L22"/>
    <property type="match status" value="1"/>
</dbReference>
<dbReference type="Gene3D" id="3.90.470.10">
    <property type="entry name" value="Ribosomal protein L22/L17"/>
    <property type="match status" value="1"/>
</dbReference>
<dbReference type="HAMAP" id="MF_01331_B">
    <property type="entry name" value="Ribosomal_uL22_B"/>
    <property type="match status" value="1"/>
</dbReference>
<dbReference type="InterPro" id="IPR001063">
    <property type="entry name" value="Ribosomal_uL22"/>
</dbReference>
<dbReference type="InterPro" id="IPR005727">
    <property type="entry name" value="Ribosomal_uL22_bac/chlpt-type"/>
</dbReference>
<dbReference type="InterPro" id="IPR047867">
    <property type="entry name" value="Ribosomal_uL22_bac/org-type"/>
</dbReference>
<dbReference type="InterPro" id="IPR036394">
    <property type="entry name" value="Ribosomal_uL22_sf"/>
</dbReference>
<dbReference type="NCBIfam" id="TIGR01044">
    <property type="entry name" value="rplV_bact"/>
    <property type="match status" value="1"/>
</dbReference>
<dbReference type="PANTHER" id="PTHR13501">
    <property type="entry name" value="CHLOROPLAST 50S RIBOSOMAL PROTEIN L22-RELATED"/>
    <property type="match status" value="1"/>
</dbReference>
<dbReference type="PANTHER" id="PTHR13501:SF8">
    <property type="entry name" value="LARGE RIBOSOMAL SUBUNIT PROTEIN UL22M"/>
    <property type="match status" value="1"/>
</dbReference>
<dbReference type="Pfam" id="PF00237">
    <property type="entry name" value="Ribosomal_L22"/>
    <property type="match status" value="1"/>
</dbReference>
<dbReference type="SUPFAM" id="SSF54843">
    <property type="entry name" value="Ribosomal protein L22"/>
    <property type="match status" value="1"/>
</dbReference>
<evidence type="ECO:0000255" key="1">
    <source>
        <dbReference type="HAMAP-Rule" id="MF_01331"/>
    </source>
</evidence>
<evidence type="ECO:0000305" key="2"/>
<keyword id="KW-1185">Reference proteome</keyword>
<keyword id="KW-0687">Ribonucleoprotein</keyword>
<keyword id="KW-0689">Ribosomal protein</keyword>
<keyword id="KW-0694">RNA-binding</keyword>
<keyword id="KW-0699">rRNA-binding</keyword>
<name>RL22_RHOP2</name>
<protein>
    <recommendedName>
        <fullName evidence="1">Large ribosomal subunit protein uL22</fullName>
    </recommendedName>
    <alternativeName>
        <fullName evidence="2">50S ribosomal protein L22</fullName>
    </alternativeName>
</protein>
<sequence length="128" mass="14033">MSKPKRERVLPDNEAKAVARMLRVSPQKLNLVAQLIRGRKAAAALADLQFSRKRIAVDVKKCLESAIANAENNHDLDVDALVVSEAHVGKGIVMKRFSPRGRGRSGRILKPFAQLTIVVRQVEAEASA</sequence>
<reference key="1">
    <citation type="submission" date="2006-01" db="EMBL/GenBank/DDBJ databases">
        <title>Complete sequence of Rhodopseudomonas palustris HaA2.</title>
        <authorList>
            <consortium name="US DOE Joint Genome Institute"/>
            <person name="Copeland A."/>
            <person name="Lucas S."/>
            <person name="Lapidus A."/>
            <person name="Barry K."/>
            <person name="Detter J.C."/>
            <person name="Glavina T."/>
            <person name="Hammon N."/>
            <person name="Israni S."/>
            <person name="Pitluck S."/>
            <person name="Chain P."/>
            <person name="Malfatti S."/>
            <person name="Shin M."/>
            <person name="Vergez L."/>
            <person name="Schmutz J."/>
            <person name="Larimer F."/>
            <person name="Land M."/>
            <person name="Hauser L."/>
            <person name="Pelletier D.A."/>
            <person name="Kyrpides N."/>
            <person name="Anderson I."/>
            <person name="Oda Y."/>
            <person name="Harwood C.S."/>
            <person name="Richardson P."/>
        </authorList>
    </citation>
    <scope>NUCLEOTIDE SEQUENCE [LARGE SCALE GENOMIC DNA]</scope>
    <source>
        <strain>HaA2</strain>
    </source>
</reference>
<gene>
    <name evidence="1" type="primary">rplV</name>
    <name type="ordered locus">RPB_2300</name>
</gene>
<organism>
    <name type="scientific">Rhodopseudomonas palustris (strain HaA2)</name>
    <dbReference type="NCBI Taxonomy" id="316058"/>
    <lineage>
        <taxon>Bacteria</taxon>
        <taxon>Pseudomonadati</taxon>
        <taxon>Pseudomonadota</taxon>
        <taxon>Alphaproteobacteria</taxon>
        <taxon>Hyphomicrobiales</taxon>
        <taxon>Nitrobacteraceae</taxon>
        <taxon>Rhodopseudomonas</taxon>
    </lineage>
</organism>
<feature type="chain" id="PRO_0000243196" description="Large ribosomal subunit protein uL22">
    <location>
        <begin position="1"/>
        <end position="128"/>
    </location>
</feature>
<accession>Q2IXQ5</accession>
<comment type="function">
    <text evidence="1">This protein binds specifically to 23S rRNA; its binding is stimulated by other ribosomal proteins, e.g. L4, L17, and L20. It is important during the early stages of 50S assembly. It makes multiple contacts with different domains of the 23S rRNA in the assembled 50S subunit and ribosome (By similarity).</text>
</comment>
<comment type="function">
    <text evidence="1">The globular domain of the protein is located near the polypeptide exit tunnel on the outside of the subunit, while an extended beta-hairpin is found that lines the wall of the exit tunnel in the center of the 70S ribosome.</text>
</comment>
<comment type="subunit">
    <text evidence="1">Part of the 50S ribosomal subunit.</text>
</comment>
<comment type="similarity">
    <text evidence="1">Belongs to the universal ribosomal protein uL22 family.</text>
</comment>
<proteinExistence type="inferred from homology"/>